<comment type="function">
    <text evidence="3">Positive regulator of brassinosteroid signaling.</text>
</comment>
<comment type="subunit">
    <text evidence="5">Homodimer.</text>
</comment>
<comment type="subcellular location">
    <subcellularLocation>
        <location evidence="5">Nucleus</location>
    </subcellularLocation>
</comment>
<comment type="alternative products">
    <event type="alternative splicing"/>
    <isoform>
        <id>Q8GWK7-1</id>
        <name>1</name>
        <sequence type="displayed"/>
    </isoform>
    <text>A number of isoforms are produced. According to EST sequences.</text>
</comment>
<comment type="tissue specificity">
    <text evidence="4">Expressed in stems.</text>
</comment>
<comment type="induction">
    <text evidence="3">Induced by brassinosteroid, auxin and ethylene, and repressed by abscisic acid. Insensitive to gibberellic acid.</text>
</comment>
<comment type="disruption phenotype">
    <text evidence="3">No visible phenotype. Redundant with BEE1 and BEE2.</text>
</comment>
<comment type="sequence caution" evidence="5">
    <conflict type="erroneous gene model prediction">
        <sequence resource="EMBL-CDS" id="AAG52074"/>
    </conflict>
</comment>
<comment type="sequence caution" evidence="5">
    <conflict type="frameshift">
        <sequence resource="EMBL" id="AF488585"/>
    </conflict>
</comment>
<accession>Q8GWK7</accession>
<accession>Q9C9S9</accession>
<keyword id="KW-0025">Alternative splicing</keyword>
<keyword id="KW-0238">DNA-binding</keyword>
<keyword id="KW-0539">Nucleus</keyword>
<keyword id="KW-1185">Reference proteome</keyword>
<keyword id="KW-0804">Transcription</keyword>
<keyword id="KW-0805">Transcription regulation</keyword>
<gene>
    <name type="primary">BEE3</name>
    <name type="synonym">BHLH50</name>
    <name type="synonym">EN76</name>
    <name type="ordered locus">At1g73830</name>
    <name type="ORF">F25P22.25</name>
</gene>
<sequence>MANLSSDFQTFTMDDPIRQLAELSNTLHHFQTFPPPFSSSLDSLFFHNQFPDHFPGKSLENNFHQGIFFPSNIQNNEESSSQFDTKKRKSLMEAVSTSENSVSDQTLSTSSAQVSINGNISTKNNSSRRGKRSKNREEEKEREVVHVRARRGQATDSHSIAERVRRGKINERLKCLQDIVPGCYKTMGMATMLDEIINYVQSLQNQVEFLSMKLTAASSYYDFNSETDAVESMQKAKAREAVEMGQGRDGSSVFHSSSWTL</sequence>
<proteinExistence type="evidence at transcript level"/>
<evidence type="ECO:0000255" key="1">
    <source>
        <dbReference type="PROSITE-ProRule" id="PRU00981"/>
    </source>
</evidence>
<evidence type="ECO:0000256" key="2">
    <source>
        <dbReference type="SAM" id="MobiDB-lite"/>
    </source>
</evidence>
<evidence type="ECO:0000269" key="3">
    <source>
    </source>
</evidence>
<evidence type="ECO:0000269" key="4">
    <source>
    </source>
</evidence>
<evidence type="ECO:0000305" key="5"/>
<protein>
    <recommendedName>
        <fullName>Transcription factor BEE 3</fullName>
    </recommendedName>
    <alternativeName>
        <fullName>Basic helix-loop-helix protein 50</fullName>
        <shortName>AtbHLH50</shortName>
        <shortName>bHLH 50</shortName>
    </alternativeName>
    <alternativeName>
        <fullName>Protein Brassinosteroid enhanced expression 3</fullName>
    </alternativeName>
    <alternativeName>
        <fullName>Transcription factor EN 76</fullName>
    </alternativeName>
    <alternativeName>
        <fullName>bHLH transcription factor bHLH050</fullName>
    </alternativeName>
</protein>
<name>BEE3_ARATH</name>
<organism>
    <name type="scientific">Arabidopsis thaliana</name>
    <name type="common">Mouse-ear cress</name>
    <dbReference type="NCBI Taxonomy" id="3702"/>
    <lineage>
        <taxon>Eukaryota</taxon>
        <taxon>Viridiplantae</taxon>
        <taxon>Streptophyta</taxon>
        <taxon>Embryophyta</taxon>
        <taxon>Tracheophyta</taxon>
        <taxon>Spermatophyta</taxon>
        <taxon>Magnoliopsida</taxon>
        <taxon>eudicotyledons</taxon>
        <taxon>Gunneridae</taxon>
        <taxon>Pentapetalae</taxon>
        <taxon>rosids</taxon>
        <taxon>malvids</taxon>
        <taxon>Brassicales</taxon>
        <taxon>Brassicaceae</taxon>
        <taxon>Camelineae</taxon>
        <taxon>Arabidopsis</taxon>
    </lineage>
</organism>
<reference key="1">
    <citation type="journal article" date="2003" name="Mol. Biol. Evol.">
        <title>The basic helix-loop-helix transcription factor family in plants: a genome-wide study of protein structure and functional diversity.</title>
        <authorList>
            <person name="Heim M.A."/>
            <person name="Jakoby M."/>
            <person name="Werber M."/>
            <person name="Martin C."/>
            <person name="Weisshaar B."/>
            <person name="Bailey P.C."/>
        </authorList>
    </citation>
    <scope>NUCLEOTIDE SEQUENCE [MRNA]</scope>
    <scope>TISSUE SPECIFICITY</scope>
    <scope>GENE FAMILY</scope>
    <scope>NOMENCLATURE</scope>
    <source>
        <strain>cv. Columbia</strain>
        <tissue>Stem</tissue>
    </source>
</reference>
<reference key="2">
    <citation type="journal article" date="2000" name="Nature">
        <title>Sequence and analysis of chromosome 1 of the plant Arabidopsis thaliana.</title>
        <authorList>
            <person name="Theologis A."/>
            <person name="Ecker J.R."/>
            <person name="Palm C.J."/>
            <person name="Federspiel N.A."/>
            <person name="Kaul S."/>
            <person name="White O."/>
            <person name="Alonso J."/>
            <person name="Altafi H."/>
            <person name="Araujo R."/>
            <person name="Bowman C.L."/>
            <person name="Brooks S.Y."/>
            <person name="Buehler E."/>
            <person name="Chan A."/>
            <person name="Chao Q."/>
            <person name="Chen H."/>
            <person name="Cheuk R.F."/>
            <person name="Chin C.W."/>
            <person name="Chung M.K."/>
            <person name="Conn L."/>
            <person name="Conway A.B."/>
            <person name="Conway A.R."/>
            <person name="Creasy T.H."/>
            <person name="Dewar K."/>
            <person name="Dunn P."/>
            <person name="Etgu P."/>
            <person name="Feldblyum T.V."/>
            <person name="Feng J.-D."/>
            <person name="Fong B."/>
            <person name="Fujii C.Y."/>
            <person name="Gill J.E."/>
            <person name="Goldsmith A.D."/>
            <person name="Haas B."/>
            <person name="Hansen N.F."/>
            <person name="Hughes B."/>
            <person name="Huizar L."/>
            <person name="Hunter J.L."/>
            <person name="Jenkins J."/>
            <person name="Johnson-Hopson C."/>
            <person name="Khan S."/>
            <person name="Khaykin E."/>
            <person name="Kim C.J."/>
            <person name="Koo H.L."/>
            <person name="Kremenetskaia I."/>
            <person name="Kurtz D.B."/>
            <person name="Kwan A."/>
            <person name="Lam B."/>
            <person name="Langin-Hooper S."/>
            <person name="Lee A."/>
            <person name="Lee J.M."/>
            <person name="Lenz C.A."/>
            <person name="Li J.H."/>
            <person name="Li Y.-P."/>
            <person name="Lin X."/>
            <person name="Liu S.X."/>
            <person name="Liu Z.A."/>
            <person name="Luros J.S."/>
            <person name="Maiti R."/>
            <person name="Marziali A."/>
            <person name="Militscher J."/>
            <person name="Miranda M."/>
            <person name="Nguyen M."/>
            <person name="Nierman W.C."/>
            <person name="Osborne B.I."/>
            <person name="Pai G."/>
            <person name="Peterson J."/>
            <person name="Pham P.K."/>
            <person name="Rizzo M."/>
            <person name="Rooney T."/>
            <person name="Rowley D."/>
            <person name="Sakano H."/>
            <person name="Salzberg S.L."/>
            <person name="Schwartz J.R."/>
            <person name="Shinn P."/>
            <person name="Southwick A.M."/>
            <person name="Sun H."/>
            <person name="Tallon L.J."/>
            <person name="Tambunga G."/>
            <person name="Toriumi M.J."/>
            <person name="Town C.D."/>
            <person name="Utterback T."/>
            <person name="Van Aken S."/>
            <person name="Vaysberg M."/>
            <person name="Vysotskaia V.S."/>
            <person name="Walker M."/>
            <person name="Wu D."/>
            <person name="Yu G."/>
            <person name="Fraser C.M."/>
            <person name="Venter J.C."/>
            <person name="Davis R.W."/>
        </authorList>
    </citation>
    <scope>NUCLEOTIDE SEQUENCE [LARGE SCALE GENOMIC DNA]</scope>
    <source>
        <strain>cv. Columbia</strain>
    </source>
</reference>
<reference key="3">
    <citation type="journal article" date="2017" name="Plant J.">
        <title>Araport11: a complete reannotation of the Arabidopsis thaliana reference genome.</title>
        <authorList>
            <person name="Cheng C.Y."/>
            <person name="Krishnakumar V."/>
            <person name="Chan A.P."/>
            <person name="Thibaud-Nissen F."/>
            <person name="Schobel S."/>
            <person name="Town C.D."/>
        </authorList>
    </citation>
    <scope>GENOME REANNOTATION</scope>
    <source>
        <strain>cv. Columbia</strain>
    </source>
</reference>
<reference key="4">
    <citation type="journal article" date="2002" name="Science">
        <title>Functional annotation of a full-length Arabidopsis cDNA collection.</title>
        <authorList>
            <person name="Seki M."/>
            <person name="Narusaka M."/>
            <person name="Kamiya A."/>
            <person name="Ishida J."/>
            <person name="Satou M."/>
            <person name="Sakurai T."/>
            <person name="Nakajima M."/>
            <person name="Enju A."/>
            <person name="Akiyama K."/>
            <person name="Oono Y."/>
            <person name="Muramatsu M."/>
            <person name="Hayashizaki Y."/>
            <person name="Kawai J."/>
            <person name="Carninci P."/>
            <person name="Itoh M."/>
            <person name="Ishii Y."/>
            <person name="Arakawa T."/>
            <person name="Shibata K."/>
            <person name="Shinagawa A."/>
            <person name="Shinozaki K."/>
        </authorList>
    </citation>
    <scope>NUCLEOTIDE SEQUENCE [LARGE SCALE MRNA]</scope>
    <source>
        <strain>cv. Columbia</strain>
    </source>
</reference>
<reference key="5">
    <citation type="journal article" date="2003" name="Science">
        <title>Empirical analysis of transcriptional activity in the Arabidopsis genome.</title>
        <authorList>
            <person name="Yamada K."/>
            <person name="Lim J."/>
            <person name="Dale J.M."/>
            <person name="Chen H."/>
            <person name="Shinn P."/>
            <person name="Palm C.J."/>
            <person name="Southwick A.M."/>
            <person name="Wu H.C."/>
            <person name="Kim C.J."/>
            <person name="Nguyen M."/>
            <person name="Pham P.K."/>
            <person name="Cheuk R.F."/>
            <person name="Karlin-Newmann G."/>
            <person name="Liu S.X."/>
            <person name="Lam B."/>
            <person name="Sakano H."/>
            <person name="Wu T."/>
            <person name="Yu G."/>
            <person name="Miranda M."/>
            <person name="Quach H.L."/>
            <person name="Tripp M."/>
            <person name="Chang C.H."/>
            <person name="Lee J.M."/>
            <person name="Toriumi M.J."/>
            <person name="Chan M.M."/>
            <person name="Tang C.C."/>
            <person name="Onodera C.S."/>
            <person name="Deng J.M."/>
            <person name="Akiyama K."/>
            <person name="Ansari Y."/>
            <person name="Arakawa T."/>
            <person name="Banh J."/>
            <person name="Banno F."/>
            <person name="Bowser L."/>
            <person name="Brooks S.Y."/>
            <person name="Carninci P."/>
            <person name="Chao Q."/>
            <person name="Choy N."/>
            <person name="Enju A."/>
            <person name="Goldsmith A.D."/>
            <person name="Gurjal M."/>
            <person name="Hansen N.F."/>
            <person name="Hayashizaki Y."/>
            <person name="Johnson-Hopson C."/>
            <person name="Hsuan V.W."/>
            <person name="Iida K."/>
            <person name="Karnes M."/>
            <person name="Khan S."/>
            <person name="Koesema E."/>
            <person name="Ishida J."/>
            <person name="Jiang P.X."/>
            <person name="Jones T."/>
            <person name="Kawai J."/>
            <person name="Kamiya A."/>
            <person name="Meyers C."/>
            <person name="Nakajima M."/>
            <person name="Narusaka M."/>
            <person name="Seki M."/>
            <person name="Sakurai T."/>
            <person name="Satou M."/>
            <person name="Tamse R."/>
            <person name="Vaysberg M."/>
            <person name="Wallender E.K."/>
            <person name="Wong C."/>
            <person name="Yamamura Y."/>
            <person name="Yuan S."/>
            <person name="Shinozaki K."/>
            <person name="Davis R.W."/>
            <person name="Theologis A."/>
            <person name="Ecker J.R."/>
        </authorList>
    </citation>
    <scope>NUCLEOTIDE SEQUENCE [LARGE SCALE MRNA]</scope>
    <source>
        <strain>cv. Columbia</strain>
    </source>
</reference>
<reference key="6">
    <citation type="journal article" date="2002" name="Genetics">
        <title>Three redundant brassinosteroid early response genes encode putative bHLH transcription factors required for normal growth.</title>
        <authorList>
            <person name="Friedrichsen D.M."/>
            <person name="Nemhauser J."/>
            <person name="Muramitsu T."/>
            <person name="Maloof J.N."/>
            <person name="Alonso J."/>
            <person name="Ecker J.R."/>
            <person name="Furuya M."/>
            <person name="Chory J."/>
        </authorList>
    </citation>
    <scope>FUNCTION</scope>
    <scope>INDUCTION</scope>
    <scope>DISRUPTION PHENOTYPE</scope>
</reference>
<reference key="7">
    <citation type="journal article" date="2003" name="Plant Cell">
        <title>The Arabidopsis basic/helix-loop-helix transcription factor family.</title>
        <authorList>
            <person name="Toledo-Ortiz G."/>
            <person name="Huq E."/>
            <person name="Quail P.H."/>
        </authorList>
    </citation>
    <scope>GENE FAMILY</scope>
</reference>
<reference key="8">
    <citation type="journal article" date="2003" name="Plant Cell">
        <title>Update on the basic helix-loop-helix transcription factor gene family in Arabidopsis thaliana.</title>
        <authorList>
            <person name="Bailey P.C."/>
            <person name="Martin C."/>
            <person name="Toledo-Ortiz G."/>
            <person name="Quail P.H."/>
            <person name="Huq E."/>
            <person name="Heim M.A."/>
            <person name="Jakoby M."/>
            <person name="Werber M."/>
            <person name="Weisshaar B."/>
        </authorList>
    </citation>
    <scope>GENE FAMILY</scope>
    <scope>NOMENCLATURE</scope>
</reference>
<dbReference type="EMBL" id="AF488585">
    <property type="status" value="NOT_ANNOTATED_CDS"/>
    <property type="molecule type" value="mRNA"/>
</dbReference>
<dbReference type="EMBL" id="AC012679">
    <property type="protein sequence ID" value="AAG52074.1"/>
    <property type="status" value="ALT_SEQ"/>
    <property type="molecule type" value="Genomic_DNA"/>
</dbReference>
<dbReference type="EMBL" id="CP002684">
    <property type="protein sequence ID" value="AEE35513.1"/>
    <property type="molecule type" value="Genomic_DNA"/>
</dbReference>
<dbReference type="EMBL" id="AK118781">
    <property type="protein sequence ID" value="BAC43374.1"/>
    <property type="molecule type" value="mRNA"/>
</dbReference>
<dbReference type="EMBL" id="BT006055">
    <property type="protein sequence ID" value="AAP04040.1"/>
    <property type="molecule type" value="mRNA"/>
</dbReference>
<dbReference type="RefSeq" id="NP_177524.2">
    <molecule id="Q8GWK7-1"/>
    <property type="nucleotide sequence ID" value="NM_106043.3"/>
</dbReference>
<dbReference type="SMR" id="Q8GWK7"/>
<dbReference type="BioGRID" id="28938">
    <property type="interactions" value="8"/>
</dbReference>
<dbReference type="FunCoup" id="Q8GWK7">
    <property type="interactions" value="97"/>
</dbReference>
<dbReference type="IntAct" id="Q8GWK7">
    <property type="interactions" value="9"/>
</dbReference>
<dbReference type="MINT" id="Q8GWK7"/>
<dbReference type="STRING" id="3702.Q8GWK7"/>
<dbReference type="PaxDb" id="3702-AT1G73830.1"/>
<dbReference type="EnsemblPlants" id="AT1G73830.1">
    <molecule id="Q8GWK7-1"/>
    <property type="protein sequence ID" value="AT1G73830.1"/>
    <property type="gene ID" value="AT1G73830"/>
</dbReference>
<dbReference type="GeneID" id="843719"/>
<dbReference type="Gramene" id="AT1G73830.1">
    <molecule id="Q8GWK7-1"/>
    <property type="protein sequence ID" value="AT1G73830.1"/>
    <property type="gene ID" value="AT1G73830"/>
</dbReference>
<dbReference type="KEGG" id="ath:AT1G73830"/>
<dbReference type="Araport" id="AT1G73830"/>
<dbReference type="TAIR" id="AT1G73830">
    <property type="gene designation" value="BEE3"/>
</dbReference>
<dbReference type="eggNOG" id="ENOG502QTM9">
    <property type="taxonomic scope" value="Eukaryota"/>
</dbReference>
<dbReference type="InParanoid" id="Q8GWK7"/>
<dbReference type="OMA" id="PENNFHQ"/>
<dbReference type="PhylomeDB" id="Q8GWK7"/>
<dbReference type="PRO" id="PR:Q8GWK7"/>
<dbReference type="Proteomes" id="UP000006548">
    <property type="component" value="Chromosome 1"/>
</dbReference>
<dbReference type="ExpressionAtlas" id="Q8GWK7">
    <property type="expression patterns" value="baseline and differential"/>
</dbReference>
<dbReference type="GO" id="GO:0005634">
    <property type="term" value="C:nucleus"/>
    <property type="evidence" value="ECO:0007669"/>
    <property type="project" value="UniProtKB-SubCell"/>
</dbReference>
<dbReference type="GO" id="GO:0003677">
    <property type="term" value="F:DNA binding"/>
    <property type="evidence" value="ECO:0007669"/>
    <property type="project" value="UniProtKB-KW"/>
</dbReference>
<dbReference type="GO" id="GO:0003700">
    <property type="term" value="F:DNA-binding transcription factor activity"/>
    <property type="evidence" value="ECO:0000250"/>
    <property type="project" value="TAIR"/>
</dbReference>
<dbReference type="GO" id="GO:0046983">
    <property type="term" value="F:protein dimerization activity"/>
    <property type="evidence" value="ECO:0007669"/>
    <property type="project" value="InterPro"/>
</dbReference>
<dbReference type="GO" id="GO:0006351">
    <property type="term" value="P:DNA-templated transcription"/>
    <property type="evidence" value="ECO:0000315"/>
    <property type="project" value="TAIR"/>
</dbReference>
<dbReference type="GO" id="GO:0006355">
    <property type="term" value="P:regulation of DNA-templated transcription"/>
    <property type="evidence" value="ECO:0000304"/>
    <property type="project" value="TAIR"/>
</dbReference>
<dbReference type="CDD" id="cd18919">
    <property type="entry name" value="bHLH_AtBPE_like"/>
    <property type="match status" value="1"/>
</dbReference>
<dbReference type="FunFam" id="4.10.280.10:FF:000058">
    <property type="entry name" value="transcription factor BEE 3-like"/>
    <property type="match status" value="1"/>
</dbReference>
<dbReference type="Gene3D" id="4.10.280.10">
    <property type="entry name" value="Helix-loop-helix DNA-binding domain"/>
    <property type="match status" value="1"/>
</dbReference>
<dbReference type="InterPro" id="IPR011598">
    <property type="entry name" value="bHLH_dom"/>
</dbReference>
<dbReference type="InterPro" id="IPR024097">
    <property type="entry name" value="bHLH_ZIP_TF"/>
</dbReference>
<dbReference type="InterPro" id="IPR036638">
    <property type="entry name" value="HLH_DNA-bd_sf"/>
</dbReference>
<dbReference type="PANTHER" id="PTHR12565">
    <property type="entry name" value="STEROL REGULATORY ELEMENT-BINDING PROTEIN"/>
    <property type="match status" value="1"/>
</dbReference>
<dbReference type="PANTHER" id="PTHR12565:SF340">
    <property type="entry name" value="TRANSCRIPTION FACTOR BEE 3"/>
    <property type="match status" value="1"/>
</dbReference>
<dbReference type="Pfam" id="PF00010">
    <property type="entry name" value="HLH"/>
    <property type="match status" value="1"/>
</dbReference>
<dbReference type="SMART" id="SM00353">
    <property type="entry name" value="HLH"/>
    <property type="match status" value="1"/>
</dbReference>
<dbReference type="SUPFAM" id="SSF47459">
    <property type="entry name" value="HLH, helix-loop-helix DNA-binding domain"/>
    <property type="match status" value="1"/>
</dbReference>
<dbReference type="PROSITE" id="PS50888">
    <property type="entry name" value="BHLH"/>
    <property type="match status" value="1"/>
</dbReference>
<feature type="chain" id="PRO_0000302044" description="Transcription factor BEE 3">
    <location>
        <begin position="1"/>
        <end position="261"/>
    </location>
</feature>
<feature type="domain" description="bHLH" evidence="1">
    <location>
        <begin position="153"/>
        <end position="203"/>
    </location>
</feature>
<feature type="region of interest" description="Disordered" evidence="2">
    <location>
        <begin position="72"/>
        <end position="158"/>
    </location>
</feature>
<feature type="region of interest" description="Disordered" evidence="2">
    <location>
        <begin position="242"/>
        <end position="261"/>
    </location>
</feature>
<feature type="compositionally biased region" description="Low complexity" evidence="2">
    <location>
        <begin position="72"/>
        <end position="82"/>
    </location>
</feature>
<feature type="compositionally biased region" description="Polar residues" evidence="2">
    <location>
        <begin position="95"/>
        <end position="123"/>
    </location>
</feature>
<feature type="compositionally biased region" description="Basic and acidic residues" evidence="2">
    <location>
        <begin position="135"/>
        <end position="146"/>
    </location>
</feature>